<sequence>MTKQTIRVELTSTKKPKPDPNQLSFGRVFTDHMFVMDYAADKGWYDPRIIPYQPLSMDPAAMVYHYGQTVFEGLKAYVSEDDHVLLFRPEKNMERLNQSNDRLCIPQIDEEQVLEGLKQLVAIDKDWIPNAEGTSLYIRPFIIATEPFLGVAASHTYKLLIILSPVGSYYKEGIKPVKIAVESEFVRAVKGGTGNAKTAGNYASSLKAQQVAEEKGFSQVLWLDGIEKKYIEEVGSMNIFFKINGEIVTPMLNGSILEGITRNSVIALLKHWGLQVSERKIAIDEVIQAHKDGILEEAFGTGTAAVISPVGELIWQDETLSINNGETGEIAKKLYDTITGIQKGAVADEFGWTTEVAALTESK</sequence>
<accession>P39576</accession>
<dbReference type="EC" id="2.6.1.42"/>
<dbReference type="EMBL" id="Z49992">
    <property type="protein sequence ID" value="CAA90289.1"/>
    <property type="molecule type" value="Genomic_DNA"/>
</dbReference>
<dbReference type="EMBL" id="AL009126">
    <property type="protein sequence ID" value="CAB15881.2"/>
    <property type="molecule type" value="Genomic_DNA"/>
</dbReference>
<dbReference type="EMBL" id="X73124">
    <property type="protein sequence ID" value="CAA51556.1"/>
    <property type="molecule type" value="Genomic_DNA"/>
</dbReference>
<dbReference type="PIR" id="S57763">
    <property type="entry name" value="S57763"/>
</dbReference>
<dbReference type="RefSeq" id="NP_391734.2">
    <property type="nucleotide sequence ID" value="NC_000964.3"/>
</dbReference>
<dbReference type="RefSeq" id="WP_003244231.1">
    <property type="nucleotide sequence ID" value="NZ_OZ025638.1"/>
</dbReference>
<dbReference type="SMR" id="P39576"/>
<dbReference type="FunCoup" id="P39576">
    <property type="interactions" value="549"/>
</dbReference>
<dbReference type="STRING" id="224308.BSU38550"/>
<dbReference type="jPOST" id="P39576"/>
<dbReference type="PaxDb" id="224308-BSU38550"/>
<dbReference type="EnsemblBacteria" id="CAB15881">
    <property type="protein sequence ID" value="CAB15881"/>
    <property type="gene ID" value="BSU_38550"/>
</dbReference>
<dbReference type="GeneID" id="937372"/>
<dbReference type="KEGG" id="bsu:BSU38550"/>
<dbReference type="PATRIC" id="fig|224308.179.peg.4174"/>
<dbReference type="eggNOG" id="COG0115">
    <property type="taxonomic scope" value="Bacteria"/>
</dbReference>
<dbReference type="InParanoid" id="P39576"/>
<dbReference type="OrthoDB" id="9804984at2"/>
<dbReference type="PhylomeDB" id="P39576"/>
<dbReference type="BioCyc" id="BSUB:BSU38550-MONOMER"/>
<dbReference type="BioCyc" id="MetaCyc:BSU38550-MONOMER"/>
<dbReference type="SABIO-RK" id="P39576"/>
<dbReference type="UniPathway" id="UPA00047">
    <property type="reaction ID" value="UER00058"/>
</dbReference>
<dbReference type="UniPathway" id="UPA00048">
    <property type="reaction ID" value="UER00073"/>
</dbReference>
<dbReference type="UniPathway" id="UPA00049">
    <property type="reaction ID" value="UER00062"/>
</dbReference>
<dbReference type="Proteomes" id="UP000001570">
    <property type="component" value="Chromosome"/>
</dbReference>
<dbReference type="GO" id="GO:0052656">
    <property type="term" value="F:L-isoleucine-2-oxoglutarate transaminase activity"/>
    <property type="evidence" value="ECO:0007669"/>
    <property type="project" value="RHEA"/>
</dbReference>
<dbReference type="GO" id="GO:0052654">
    <property type="term" value="F:L-leucine-2-oxoglutarate transaminase activity"/>
    <property type="evidence" value="ECO:0007669"/>
    <property type="project" value="RHEA"/>
</dbReference>
<dbReference type="GO" id="GO:0052655">
    <property type="term" value="F:L-valine-2-oxoglutarate transaminase activity"/>
    <property type="evidence" value="ECO:0007669"/>
    <property type="project" value="RHEA"/>
</dbReference>
<dbReference type="GO" id="GO:0009097">
    <property type="term" value="P:isoleucine biosynthetic process"/>
    <property type="evidence" value="ECO:0007669"/>
    <property type="project" value="UniProtKB-UniPathway"/>
</dbReference>
<dbReference type="GO" id="GO:0009098">
    <property type="term" value="P:L-leucine biosynthetic process"/>
    <property type="evidence" value="ECO:0007669"/>
    <property type="project" value="UniProtKB-UniPathway"/>
</dbReference>
<dbReference type="GO" id="GO:0009099">
    <property type="term" value="P:L-valine biosynthetic process"/>
    <property type="evidence" value="ECO:0007669"/>
    <property type="project" value="UniProtKB-UniPathway"/>
</dbReference>
<dbReference type="CDD" id="cd01557">
    <property type="entry name" value="BCAT_beta_family"/>
    <property type="match status" value="1"/>
</dbReference>
<dbReference type="FunFam" id="3.30.470.10:FF:000002">
    <property type="entry name" value="Branched-chain-amino-acid aminotransferase"/>
    <property type="match status" value="1"/>
</dbReference>
<dbReference type="Gene3D" id="3.30.470.10">
    <property type="match status" value="1"/>
</dbReference>
<dbReference type="Gene3D" id="3.20.10.10">
    <property type="entry name" value="D-amino Acid Aminotransferase, subunit A, domain 2"/>
    <property type="match status" value="1"/>
</dbReference>
<dbReference type="InterPro" id="IPR001544">
    <property type="entry name" value="Aminotrans_IV"/>
</dbReference>
<dbReference type="InterPro" id="IPR018300">
    <property type="entry name" value="Aminotrans_IV_CS"/>
</dbReference>
<dbReference type="InterPro" id="IPR036038">
    <property type="entry name" value="Aminotransferase-like"/>
</dbReference>
<dbReference type="InterPro" id="IPR005786">
    <property type="entry name" value="B_amino_transII"/>
</dbReference>
<dbReference type="InterPro" id="IPR043132">
    <property type="entry name" value="BCAT-like_C"/>
</dbReference>
<dbReference type="InterPro" id="IPR043131">
    <property type="entry name" value="BCAT-like_N"/>
</dbReference>
<dbReference type="InterPro" id="IPR033939">
    <property type="entry name" value="BCAT_family"/>
</dbReference>
<dbReference type="NCBIfam" id="TIGR01123">
    <property type="entry name" value="ilvE_II"/>
    <property type="match status" value="1"/>
</dbReference>
<dbReference type="NCBIfam" id="NF009897">
    <property type="entry name" value="PRK13357.1"/>
    <property type="match status" value="1"/>
</dbReference>
<dbReference type="PANTHER" id="PTHR11825:SF44">
    <property type="entry name" value="BRANCHED-CHAIN-AMINO-ACID AMINOTRANSFERASE"/>
    <property type="match status" value="1"/>
</dbReference>
<dbReference type="PANTHER" id="PTHR11825">
    <property type="entry name" value="SUBGROUP IIII AMINOTRANSFERASE"/>
    <property type="match status" value="1"/>
</dbReference>
<dbReference type="Pfam" id="PF01063">
    <property type="entry name" value="Aminotran_4"/>
    <property type="match status" value="1"/>
</dbReference>
<dbReference type="PIRSF" id="PIRSF006468">
    <property type="entry name" value="BCAT1"/>
    <property type="match status" value="1"/>
</dbReference>
<dbReference type="SUPFAM" id="SSF56752">
    <property type="entry name" value="D-aminoacid aminotransferase-like PLP-dependent enzymes"/>
    <property type="match status" value="1"/>
</dbReference>
<dbReference type="PROSITE" id="PS00770">
    <property type="entry name" value="AA_TRANSFER_CLASS_4"/>
    <property type="match status" value="1"/>
</dbReference>
<feature type="initiator methionine" description="Removed" evidence="3">
    <location>
        <position position="1"/>
    </location>
</feature>
<feature type="chain" id="PRO_0000103272" description="Branched-chain-amino-acid aminotransferase 2">
    <location>
        <begin position="2"/>
        <end position="363"/>
    </location>
</feature>
<feature type="modified residue" description="N6-(pyridoxal phosphate)lysine" evidence="1">
    <location>
        <position position="197"/>
    </location>
</feature>
<feature type="sequence conflict" description="In Ref. 1; CAA90289." evidence="4" ref="1">
    <original>A</original>
    <variation>T</variation>
    <location>
        <position position="60"/>
    </location>
</feature>
<comment type="function">
    <text evidence="2">Transaminates branched-chain amino acids and ketoglutarate.</text>
</comment>
<comment type="catalytic activity">
    <reaction>
        <text>L-leucine + 2-oxoglutarate = 4-methyl-2-oxopentanoate + L-glutamate</text>
        <dbReference type="Rhea" id="RHEA:18321"/>
        <dbReference type="ChEBI" id="CHEBI:16810"/>
        <dbReference type="ChEBI" id="CHEBI:17865"/>
        <dbReference type="ChEBI" id="CHEBI:29985"/>
        <dbReference type="ChEBI" id="CHEBI:57427"/>
        <dbReference type="EC" id="2.6.1.42"/>
    </reaction>
</comment>
<comment type="catalytic activity">
    <reaction>
        <text>L-isoleucine + 2-oxoglutarate = (S)-3-methyl-2-oxopentanoate + L-glutamate</text>
        <dbReference type="Rhea" id="RHEA:24801"/>
        <dbReference type="ChEBI" id="CHEBI:16810"/>
        <dbReference type="ChEBI" id="CHEBI:29985"/>
        <dbReference type="ChEBI" id="CHEBI:35146"/>
        <dbReference type="ChEBI" id="CHEBI:58045"/>
        <dbReference type="EC" id="2.6.1.42"/>
    </reaction>
</comment>
<comment type="catalytic activity">
    <reaction>
        <text>L-valine + 2-oxoglutarate = 3-methyl-2-oxobutanoate + L-glutamate</text>
        <dbReference type="Rhea" id="RHEA:24813"/>
        <dbReference type="ChEBI" id="CHEBI:11851"/>
        <dbReference type="ChEBI" id="CHEBI:16810"/>
        <dbReference type="ChEBI" id="CHEBI:29985"/>
        <dbReference type="ChEBI" id="CHEBI:57762"/>
        <dbReference type="EC" id="2.6.1.42"/>
    </reaction>
</comment>
<comment type="cofactor">
    <cofactor>
        <name>pyridoxal 5'-phosphate</name>
        <dbReference type="ChEBI" id="CHEBI:597326"/>
    </cofactor>
</comment>
<comment type="activity regulation">
    <text evidence="2">Inhibited by canaline.</text>
</comment>
<comment type="biophysicochemical properties">
    <kinetics>
        <KM evidence="2">2.11 mM for isoleucine (with 10 mM ketomethiobutyrate)</KM>
        <KM evidence="2">3.04 mM for leucine (with 10 mM alpha-ketoglutarate)</KM>
        <KM evidence="2">3.34 mM for valine (with 10 mM alpha-ketoglutarate)</KM>
        <KM evidence="2">4.83 mM for isoleucine (with 10 mM alpha-ketoglutarate)</KM>
        <KM evidence="2">5.68 mM for leucine (with 10 mM ketomethiobutyrate)</KM>
        <Vmax evidence="2">0.02 umol/min/mg enzyme toward isoleucine (with 10 mM ketomethiobutyrate)</Vmax>
        <Vmax evidence="2">0.02 umol/min/mg enzyme toward leucine (with 10 mM ketomethiobutyrate)</Vmax>
        <Vmax evidence="2">0.05 umol/min/mg enzyme toward valine (with 10 mM alpha-ketoglutarate)</Vmax>
        <Vmax evidence="2">0.1 umol/min/mg enzyme toward leucine (with 10 mM alpha-ketoglutarate)</Vmax>
        <Vmax evidence="2">0.23 umol/min/mg enzyme toward isoleucine (with 10 mM alpha-ketoglutarate)</Vmax>
    </kinetics>
</comment>
<comment type="pathway">
    <text>Amino-acid biosynthesis; L-isoleucine biosynthesis; L-isoleucine from 2-oxobutanoate: step 4/4.</text>
</comment>
<comment type="pathway">
    <text>Amino-acid biosynthesis; L-leucine biosynthesis; L-leucine from 3-methyl-2-oxobutanoate: step 4/4.</text>
</comment>
<comment type="pathway">
    <text>Amino-acid biosynthesis; L-valine biosynthesis; L-valine from pyruvate: step 4/4.</text>
</comment>
<comment type="similarity">
    <text evidence="4">Belongs to the class-IV pyridoxal-phosphate-dependent aminotransferase family.</text>
</comment>
<keyword id="KW-0028">Amino-acid biosynthesis</keyword>
<keyword id="KW-0032">Aminotransferase</keyword>
<keyword id="KW-0100">Branched-chain amino acid biosynthesis</keyword>
<keyword id="KW-0903">Direct protein sequencing</keyword>
<keyword id="KW-0663">Pyridoxal phosphate</keyword>
<keyword id="KW-1185">Reference proteome</keyword>
<keyword id="KW-0808">Transferase</keyword>
<protein>
    <recommendedName>
        <fullName>Branched-chain-amino-acid aminotransferase 2</fullName>
        <shortName>BCAT 2</shortName>
        <ecNumber>2.6.1.42</ecNumber>
    </recommendedName>
    <alternativeName>
        <fullName>Vegetative protein 85</fullName>
        <shortName>VEG85</shortName>
    </alternativeName>
</protein>
<gene>
    <name type="primary">ilvK</name>
    <name type="synonym">ywaA</name>
    <name type="ordered locus">BSU38550</name>
    <name type="ORF">ipa-0r</name>
</gene>
<organism>
    <name type="scientific">Bacillus subtilis (strain 168)</name>
    <dbReference type="NCBI Taxonomy" id="224308"/>
    <lineage>
        <taxon>Bacteria</taxon>
        <taxon>Bacillati</taxon>
        <taxon>Bacillota</taxon>
        <taxon>Bacilli</taxon>
        <taxon>Bacillales</taxon>
        <taxon>Bacillaceae</taxon>
        <taxon>Bacillus</taxon>
    </lineage>
</organism>
<name>ILVE2_BACSU</name>
<evidence type="ECO:0000250" key="1"/>
<evidence type="ECO:0000269" key="2">
    <source>
    </source>
</evidence>
<evidence type="ECO:0000269" key="3">
    <source>
    </source>
</evidence>
<evidence type="ECO:0000305" key="4"/>
<reference key="1">
    <citation type="submission" date="1995-07" db="EMBL/GenBank/DDBJ databases">
        <authorList>
            <person name="Glaser P."/>
            <person name="Lubochinsky B."/>
            <person name="Danchin A."/>
        </authorList>
    </citation>
    <scope>NUCLEOTIDE SEQUENCE [GENOMIC DNA]</scope>
    <source>
        <strain>168</strain>
    </source>
</reference>
<reference key="2">
    <citation type="journal article" date="1997" name="Nature">
        <title>The complete genome sequence of the Gram-positive bacterium Bacillus subtilis.</title>
        <authorList>
            <person name="Kunst F."/>
            <person name="Ogasawara N."/>
            <person name="Moszer I."/>
            <person name="Albertini A.M."/>
            <person name="Alloni G."/>
            <person name="Azevedo V."/>
            <person name="Bertero M.G."/>
            <person name="Bessieres P."/>
            <person name="Bolotin A."/>
            <person name="Borchert S."/>
            <person name="Borriss R."/>
            <person name="Boursier L."/>
            <person name="Brans A."/>
            <person name="Braun M."/>
            <person name="Brignell S.C."/>
            <person name="Bron S."/>
            <person name="Brouillet S."/>
            <person name="Bruschi C.V."/>
            <person name="Caldwell B."/>
            <person name="Capuano V."/>
            <person name="Carter N.M."/>
            <person name="Choi S.-K."/>
            <person name="Codani J.-J."/>
            <person name="Connerton I.F."/>
            <person name="Cummings N.J."/>
            <person name="Daniel R.A."/>
            <person name="Denizot F."/>
            <person name="Devine K.M."/>
            <person name="Duesterhoeft A."/>
            <person name="Ehrlich S.D."/>
            <person name="Emmerson P.T."/>
            <person name="Entian K.-D."/>
            <person name="Errington J."/>
            <person name="Fabret C."/>
            <person name="Ferrari E."/>
            <person name="Foulger D."/>
            <person name="Fritz C."/>
            <person name="Fujita M."/>
            <person name="Fujita Y."/>
            <person name="Fuma S."/>
            <person name="Galizzi A."/>
            <person name="Galleron N."/>
            <person name="Ghim S.-Y."/>
            <person name="Glaser P."/>
            <person name="Goffeau A."/>
            <person name="Golightly E.J."/>
            <person name="Grandi G."/>
            <person name="Guiseppi G."/>
            <person name="Guy B.J."/>
            <person name="Haga K."/>
            <person name="Haiech J."/>
            <person name="Harwood C.R."/>
            <person name="Henaut A."/>
            <person name="Hilbert H."/>
            <person name="Holsappel S."/>
            <person name="Hosono S."/>
            <person name="Hullo M.-F."/>
            <person name="Itaya M."/>
            <person name="Jones L.-M."/>
            <person name="Joris B."/>
            <person name="Karamata D."/>
            <person name="Kasahara Y."/>
            <person name="Klaerr-Blanchard M."/>
            <person name="Klein C."/>
            <person name="Kobayashi Y."/>
            <person name="Koetter P."/>
            <person name="Koningstein G."/>
            <person name="Krogh S."/>
            <person name="Kumano M."/>
            <person name="Kurita K."/>
            <person name="Lapidus A."/>
            <person name="Lardinois S."/>
            <person name="Lauber J."/>
            <person name="Lazarevic V."/>
            <person name="Lee S.-M."/>
            <person name="Levine A."/>
            <person name="Liu H."/>
            <person name="Masuda S."/>
            <person name="Mauel C."/>
            <person name="Medigue C."/>
            <person name="Medina N."/>
            <person name="Mellado R.P."/>
            <person name="Mizuno M."/>
            <person name="Moestl D."/>
            <person name="Nakai S."/>
            <person name="Noback M."/>
            <person name="Noone D."/>
            <person name="O'Reilly M."/>
            <person name="Ogawa K."/>
            <person name="Ogiwara A."/>
            <person name="Oudega B."/>
            <person name="Park S.-H."/>
            <person name="Parro V."/>
            <person name="Pohl T.M."/>
            <person name="Portetelle D."/>
            <person name="Porwollik S."/>
            <person name="Prescott A.M."/>
            <person name="Presecan E."/>
            <person name="Pujic P."/>
            <person name="Purnelle B."/>
            <person name="Rapoport G."/>
            <person name="Rey M."/>
            <person name="Reynolds S."/>
            <person name="Rieger M."/>
            <person name="Rivolta C."/>
            <person name="Rocha E."/>
            <person name="Roche B."/>
            <person name="Rose M."/>
            <person name="Sadaie Y."/>
            <person name="Sato T."/>
            <person name="Scanlan E."/>
            <person name="Schleich S."/>
            <person name="Schroeter R."/>
            <person name="Scoffone F."/>
            <person name="Sekiguchi J."/>
            <person name="Sekowska A."/>
            <person name="Seror S.J."/>
            <person name="Serror P."/>
            <person name="Shin B.-S."/>
            <person name="Soldo B."/>
            <person name="Sorokin A."/>
            <person name="Tacconi E."/>
            <person name="Takagi T."/>
            <person name="Takahashi H."/>
            <person name="Takemaru K."/>
            <person name="Takeuchi M."/>
            <person name="Tamakoshi A."/>
            <person name="Tanaka T."/>
            <person name="Terpstra P."/>
            <person name="Tognoni A."/>
            <person name="Tosato V."/>
            <person name="Uchiyama S."/>
            <person name="Vandenbol M."/>
            <person name="Vannier F."/>
            <person name="Vassarotti A."/>
            <person name="Viari A."/>
            <person name="Wambutt R."/>
            <person name="Wedler E."/>
            <person name="Wedler H."/>
            <person name="Weitzenegger T."/>
            <person name="Winters P."/>
            <person name="Wipat A."/>
            <person name="Yamamoto H."/>
            <person name="Yamane K."/>
            <person name="Yasumoto K."/>
            <person name="Yata K."/>
            <person name="Yoshida K."/>
            <person name="Yoshikawa H.-F."/>
            <person name="Zumstein E."/>
            <person name="Yoshikawa H."/>
            <person name="Danchin A."/>
        </authorList>
    </citation>
    <scope>NUCLEOTIDE SEQUENCE [LARGE SCALE GENOMIC DNA]</scope>
    <source>
        <strain>168</strain>
    </source>
</reference>
<reference key="3">
    <citation type="journal article" date="2009" name="Microbiology">
        <title>From a consortium sequence to a unified sequence: the Bacillus subtilis 168 reference genome a decade later.</title>
        <authorList>
            <person name="Barbe V."/>
            <person name="Cruveiller S."/>
            <person name="Kunst F."/>
            <person name="Lenoble P."/>
            <person name="Meurice G."/>
            <person name="Sekowska A."/>
            <person name="Vallenet D."/>
            <person name="Wang T."/>
            <person name="Moszer I."/>
            <person name="Medigue C."/>
            <person name="Danchin A."/>
        </authorList>
    </citation>
    <scope>SEQUENCE REVISION TO 60</scope>
</reference>
<reference key="4">
    <citation type="journal article" date="1993" name="Mol. Microbiol.">
        <title>Bacillus subtilis genome project: cloning and sequencing of the 97 kb region from 325 degrees to 333 degrees.</title>
        <authorList>
            <person name="Glaser P."/>
            <person name="Kunst F."/>
            <person name="Arnaud M."/>
            <person name="Coudart M.P."/>
            <person name="Gonzales W."/>
            <person name="Hullo M.-F."/>
            <person name="Ionescu M."/>
            <person name="Lubochinsky B."/>
            <person name="Marcelino L."/>
            <person name="Moszer I."/>
            <person name="Presecan E."/>
            <person name="Santana M."/>
            <person name="Schneider E."/>
            <person name="Schweizer J."/>
            <person name="Vertes A."/>
            <person name="Rapoport G."/>
            <person name="Danchin A."/>
        </authorList>
    </citation>
    <scope>NUCLEOTIDE SEQUENCE [GENOMIC DNA] OF 1-58</scope>
    <source>
        <strain>168</strain>
    </source>
</reference>
<reference key="5">
    <citation type="journal article" date="1997" name="Electrophoresis">
        <title>First steps from a two-dimensional protein index towards a response-regulation map for Bacillus subtilis.</title>
        <authorList>
            <person name="Antelmann H."/>
            <person name="Bernhardt J."/>
            <person name="Schmid R."/>
            <person name="Mach H."/>
            <person name="Voelker U."/>
            <person name="Hecker M."/>
        </authorList>
    </citation>
    <scope>PROTEIN SEQUENCE OF 2-10</scope>
    <source>
        <strain>168 / IS58</strain>
    </source>
</reference>
<reference key="6">
    <citation type="journal article" date="2003" name="J. Bacteriol.">
        <title>Methionine regeneration and aminotransferases in Bacillus subtilis, Bacillus cereus, and Bacillus anthracis.</title>
        <authorList>
            <person name="Berger B.J."/>
            <person name="English S."/>
            <person name="Chan G."/>
            <person name="Knodel M.H."/>
        </authorList>
    </citation>
    <scope>FUNCTION</scope>
    <scope>ACTIVITY REGULATION</scope>
    <scope>BIOPHYSICOCHEMICAL PROPERTIES</scope>
</reference>
<proteinExistence type="evidence at protein level"/>